<feature type="chain" id="PRO_1000204762" description="Large ribosomal subunit protein eL20">
    <location>
        <begin position="1"/>
        <end position="78"/>
    </location>
</feature>
<keyword id="KW-1185">Reference proteome</keyword>
<keyword id="KW-0687">Ribonucleoprotein</keyword>
<keyword id="KW-0689">Ribosomal protein</keyword>
<keyword id="KW-0694">RNA-binding</keyword>
<keyword id="KW-0699">rRNA-binding</keyword>
<comment type="subunit">
    <text evidence="1">Part of the 50S ribosomal subunit. Binds 23S rRNA.</text>
</comment>
<comment type="similarity">
    <text evidence="1">Belongs to the eukaryotic ribosomal protein eL20 family.</text>
</comment>
<accession>C6A267</accession>
<evidence type="ECO:0000255" key="1">
    <source>
        <dbReference type="HAMAP-Rule" id="MF_00273"/>
    </source>
</evidence>
<evidence type="ECO:0000305" key="2"/>
<reference key="1">
    <citation type="journal article" date="2009" name="Appl. Environ. Microbiol.">
        <title>Metabolic versatility and indigenous origin of the archaeon Thermococcus sibiricus, isolated from a siberian oil reservoir, as revealed by genome analysis.</title>
        <authorList>
            <person name="Mardanov A.V."/>
            <person name="Ravin N.V."/>
            <person name="Svetlitchnyi V.A."/>
            <person name="Beletsky A.V."/>
            <person name="Miroshnichenko M.L."/>
            <person name="Bonch-Osmolovskaya E.A."/>
            <person name="Skryabin K.G."/>
        </authorList>
    </citation>
    <scope>NUCLEOTIDE SEQUENCE [LARGE SCALE GENOMIC DNA]</scope>
    <source>
        <strain>DSM 12597 / MM 739</strain>
    </source>
</reference>
<organism>
    <name type="scientific">Thermococcus sibiricus (strain DSM 12597 / MM 739)</name>
    <dbReference type="NCBI Taxonomy" id="604354"/>
    <lineage>
        <taxon>Archaea</taxon>
        <taxon>Methanobacteriati</taxon>
        <taxon>Methanobacteriota</taxon>
        <taxon>Thermococci</taxon>
        <taxon>Thermococcales</taxon>
        <taxon>Thermococcaceae</taxon>
        <taxon>Thermococcus</taxon>
    </lineage>
</organism>
<dbReference type="EMBL" id="CP001463">
    <property type="protein sequence ID" value="ACS89712.1"/>
    <property type="molecule type" value="Genomic_DNA"/>
</dbReference>
<dbReference type="RefSeq" id="WP_015848932.1">
    <property type="nucleotide sequence ID" value="NC_012883.1"/>
</dbReference>
<dbReference type="SMR" id="C6A267"/>
<dbReference type="STRING" id="604354.TSIB_0647"/>
<dbReference type="GeneID" id="8095635"/>
<dbReference type="KEGG" id="tsi:TSIB_0647"/>
<dbReference type="eggNOG" id="arCOG04175">
    <property type="taxonomic scope" value="Archaea"/>
</dbReference>
<dbReference type="HOGENOM" id="CLU_177460_0_1_2"/>
<dbReference type="OrthoDB" id="191241at2157"/>
<dbReference type="Proteomes" id="UP000009079">
    <property type="component" value="Chromosome"/>
</dbReference>
<dbReference type="GO" id="GO:1990904">
    <property type="term" value="C:ribonucleoprotein complex"/>
    <property type="evidence" value="ECO:0007669"/>
    <property type="project" value="UniProtKB-KW"/>
</dbReference>
<dbReference type="GO" id="GO:0005840">
    <property type="term" value="C:ribosome"/>
    <property type="evidence" value="ECO:0007669"/>
    <property type="project" value="UniProtKB-KW"/>
</dbReference>
<dbReference type="GO" id="GO:0070180">
    <property type="term" value="F:large ribosomal subunit rRNA binding"/>
    <property type="evidence" value="ECO:0007669"/>
    <property type="project" value="UniProtKB-UniRule"/>
</dbReference>
<dbReference type="GO" id="GO:0003735">
    <property type="term" value="F:structural constituent of ribosome"/>
    <property type="evidence" value="ECO:0007669"/>
    <property type="project" value="InterPro"/>
</dbReference>
<dbReference type="GO" id="GO:0006412">
    <property type="term" value="P:translation"/>
    <property type="evidence" value="ECO:0007669"/>
    <property type="project" value="UniProtKB-UniRule"/>
</dbReference>
<dbReference type="Gene3D" id="3.10.20.10">
    <property type="match status" value="1"/>
</dbReference>
<dbReference type="HAMAP" id="MF_00273">
    <property type="entry name" value="Ribosomal_eL20"/>
    <property type="match status" value="1"/>
</dbReference>
<dbReference type="InterPro" id="IPR028877">
    <property type="entry name" value="Ribosomal_eL20"/>
</dbReference>
<dbReference type="InterPro" id="IPR023573">
    <property type="entry name" value="Ribosomal_eL20_dom"/>
</dbReference>
<dbReference type="NCBIfam" id="NF001981">
    <property type="entry name" value="PRK00773.1-1"/>
    <property type="match status" value="1"/>
</dbReference>
<dbReference type="Pfam" id="PF01775">
    <property type="entry name" value="Ribosomal_L18A"/>
    <property type="match status" value="1"/>
</dbReference>
<dbReference type="SUPFAM" id="SSF160374">
    <property type="entry name" value="RplX-like"/>
    <property type="match status" value="1"/>
</dbReference>
<gene>
    <name evidence="1" type="primary">rpl18a</name>
    <name evidence="1" type="synonym">rpl20e</name>
    <name evidence="1" type="synonym">rplX</name>
    <name type="ordered locus">TSIB_0647</name>
</gene>
<sequence length="78" mass="9138">MEVKIFRVKGTFEKGGKKFRFTKEYRALKPEDVRELVFSDIGSKHRVKRAKIFIESIEEIEPVEAENLVVKRLSLELA</sequence>
<proteinExistence type="inferred from homology"/>
<name>RL18A_THESM</name>
<protein>
    <recommendedName>
        <fullName evidence="1">Large ribosomal subunit protein eL20</fullName>
    </recommendedName>
    <alternativeName>
        <fullName evidence="2">50S ribosomal protein L18Ae</fullName>
    </alternativeName>
    <alternativeName>
        <fullName evidence="1">50S ribosomal protein L20e</fullName>
    </alternativeName>
    <alternativeName>
        <fullName evidence="1">50S ribosomal protein LX</fullName>
    </alternativeName>
</protein>